<organismHost>
    <name type="scientific">Acidianus sp. F28</name>
    <dbReference type="NCBI Taxonomy" id="315458"/>
</organismHost>
<keyword id="KW-1043">Host membrane</keyword>
<keyword id="KW-0472">Membrane</keyword>
<keyword id="KW-1185">Reference proteome</keyword>
<keyword id="KW-0812">Transmembrane</keyword>
<keyword id="KW-1133">Transmembrane helix</keyword>
<evidence type="ECO:0000255" key="1"/>
<evidence type="ECO:0000305" key="2"/>
<protein>
    <recommendedName>
        <fullName>Uncharacterized protein ORF413</fullName>
    </recommendedName>
</protein>
<reference key="1">
    <citation type="journal article" date="2005" name="J. Bacteriol.">
        <title>Structure and genome organization of AFV2, a novel archaeal lipothrixvirus with unusual terminal and core structures.</title>
        <authorList>
            <person name="Haring M."/>
            <person name="Vestergaard G."/>
            <person name="Brugger K."/>
            <person name="Rachel R."/>
            <person name="Garrett R.A."/>
            <person name="Prangishvili D."/>
        </authorList>
    </citation>
    <scope>NUCLEOTIDE SEQUENCE [GENOMIC DNA]</scope>
</reference>
<sequence>MIYGEVTLTIIDNDKKVKIRKKNTIVNLSALLPLITSTTSTAGSIITPYIQTNAGNIPVTYSVQPYESGYVFIFTGSFSQPSNIISAFLYPSSLSTFQQPIASIVYSREITGVTSIEWAIYVDDATGLLYNALLPNIITSTNFLSALYADDGNTNALLTLGAYQHYVYAYFSDATISKAINYINAHYFTFIDYTTSPSAITIGNNFALQLVPASTGQHTVFYYLWNSQNFTMQFSFSSGSSPLADGFVVCMYATTPPIALNTSSVTGMTNGTLAYGEGNQICVEFDPYSSQPISVTQWNGSGYVSTLLSSSGAGTGTSMTANDIFVLEITVSGTTMTVTVTDVTANKTIASQSVTLPFTPPSYGYAIITARNENDYANWSLVNIVDWYPYSIQIPTSYVSPQLLPITAIFNTD</sequence>
<accession>Q573D3</accession>
<proteinExistence type="predicted"/>
<comment type="subcellular location">
    <subcellularLocation>
        <location evidence="2">Host membrane</location>
        <topology evidence="2">Single-pass membrane protein</topology>
    </subcellularLocation>
</comment>
<name>Y413_AFV2P</name>
<dbReference type="EMBL" id="AJ854042">
    <property type="protein sequence ID" value="CAH69423.1"/>
    <property type="molecule type" value="Genomic_DNA"/>
</dbReference>
<dbReference type="RefSeq" id="YP_001496961.1">
    <property type="nucleotide sequence ID" value="NC_009884.1"/>
</dbReference>
<dbReference type="SMR" id="Q573D3"/>
<dbReference type="KEGG" id="vg:5656085"/>
<dbReference type="Proteomes" id="UP000006364">
    <property type="component" value="Genome"/>
</dbReference>
<dbReference type="GO" id="GO:0033644">
    <property type="term" value="C:host cell membrane"/>
    <property type="evidence" value="ECO:0007669"/>
    <property type="project" value="UniProtKB-SubCell"/>
</dbReference>
<dbReference type="GO" id="GO:0016020">
    <property type="term" value="C:membrane"/>
    <property type="evidence" value="ECO:0007669"/>
    <property type="project" value="UniProtKB-KW"/>
</dbReference>
<dbReference type="InterPro" id="IPR013320">
    <property type="entry name" value="ConA-like_dom_sf"/>
</dbReference>
<dbReference type="SUPFAM" id="SSF49899">
    <property type="entry name" value="Concanavalin A-like lectins/glucanases"/>
    <property type="match status" value="1"/>
</dbReference>
<feature type="chain" id="PRO_0000384530" description="Uncharacterized protein ORF413">
    <location>
        <begin position="1"/>
        <end position="413"/>
    </location>
</feature>
<feature type="transmembrane region" description="Helical" evidence="1">
    <location>
        <begin position="25"/>
        <end position="47"/>
    </location>
</feature>
<gene>
    <name type="ORF">ORF413</name>
</gene>
<organism>
    <name type="scientific">Acidianus filamentous virus 2 (isolate Italy/Pozzuoli)</name>
    <name type="common">AFV-2</name>
    <dbReference type="NCBI Taxonomy" id="654910"/>
    <lineage>
        <taxon>Viruses</taxon>
        <taxon>Adnaviria</taxon>
        <taxon>Zilligvirae</taxon>
        <taxon>Taleaviricota</taxon>
        <taxon>Tokiviricetes</taxon>
        <taxon>Ligamenvirales</taxon>
        <taxon>Lipothrixviridae</taxon>
        <taxon>Deltalipothrixvirus</taxon>
        <taxon>Acidianus filamentous virus 2</taxon>
    </lineage>
</organism>